<feature type="chain" id="PRO_0000459731" description="P-type sodium-transporting ATPase4">
    <location>
        <begin position="1"/>
        <end position="1338"/>
    </location>
</feature>
<feature type="transmembrane region" description="Helical" evidence="1">
    <location>
        <begin position="229"/>
        <end position="249"/>
    </location>
</feature>
<feature type="transmembrane region" description="Helical" evidence="1">
    <location>
        <begin position="255"/>
        <end position="275"/>
    </location>
</feature>
<feature type="transmembrane region" description="Helical" evidence="1">
    <location>
        <begin position="418"/>
        <end position="438"/>
    </location>
</feature>
<feature type="transmembrane region" description="Helical" evidence="1">
    <location>
        <begin position="456"/>
        <end position="476"/>
    </location>
</feature>
<feature type="transmembrane region" description="Helical" evidence="1">
    <location>
        <begin position="985"/>
        <end position="1005"/>
    </location>
</feature>
<feature type="transmembrane region" description="Helical" evidence="1">
    <location>
        <begin position="1068"/>
        <end position="1088"/>
    </location>
</feature>
<feature type="transmembrane region" description="Helical" evidence="1">
    <location>
        <begin position="1261"/>
        <end position="1281"/>
    </location>
</feature>
<feature type="transmembrane region" description="Helical" evidence="1">
    <location>
        <begin position="1288"/>
        <end position="1308"/>
    </location>
</feature>
<feature type="region of interest" description="Disordered" evidence="2">
    <location>
        <begin position="1"/>
        <end position="106"/>
    </location>
</feature>
<feature type="compositionally biased region" description="Basic and acidic residues" evidence="2">
    <location>
        <begin position="55"/>
        <end position="69"/>
    </location>
</feature>
<feature type="compositionally biased region" description="Polar residues" evidence="2">
    <location>
        <begin position="91"/>
        <end position="104"/>
    </location>
</feature>
<feature type="mutagenesis site" description="Reduces sensitivity of the protein to inhibition by cipargamin and (+)-SJ733." evidence="4">
    <original>G</original>
    <variation>S</variation>
    <location>
        <position position="419"/>
    </location>
</feature>
<gene>
    <name evidence="6" type="primary">ATP4</name>
    <name evidence="7" type="ORF">BN1205_029270</name>
    <name evidence="8" type="ORF">TGVEG_278660</name>
</gene>
<comment type="function">
    <text evidence="3 4">Sodium-exporting ATPase (PubMed:36180431). Required for the extrusion of Na(+) from the parasites to maintain a low cytosolic concentration of Na(+) (PubMed:30723156). Required for maintaining the viability of extracellular parasites but not for intracellular growth, egress or invasion (PubMed:30723156). Involved in parasite virulence (PubMed:30723156).</text>
</comment>
<comment type="catalytic activity">
    <reaction evidence="4">
        <text>Na(+)(in) + ATP + H2O = Na(+)(out) + ADP + phosphate + H(+)</text>
        <dbReference type="Rhea" id="RHEA:14633"/>
        <dbReference type="ChEBI" id="CHEBI:15377"/>
        <dbReference type="ChEBI" id="CHEBI:15378"/>
        <dbReference type="ChEBI" id="CHEBI:29101"/>
        <dbReference type="ChEBI" id="CHEBI:30616"/>
        <dbReference type="ChEBI" id="CHEBI:43474"/>
        <dbReference type="ChEBI" id="CHEBI:456216"/>
        <dbReference type="EC" id="7.2.2.3"/>
    </reaction>
    <physiologicalReaction direction="left-to-right" evidence="6">
        <dbReference type="Rhea" id="RHEA:14634"/>
    </physiologicalReaction>
</comment>
<comment type="activity regulation">
    <text evidence="3 4">Inhibited by cipargamin, a synthetic spiroindolone (PubMed:30723156, PubMed:36180431). Inhibited by pyrazoleamide PA21A050, structurally unrelated to the spiroindolones (PubMed:30723156). Inhibited by (+)-SJ733, a dihydroisoquinolone compound (PubMed:36180431).</text>
</comment>
<comment type="subcellular location">
    <subcellularLocation>
        <location evidence="3 4">Cell membrane</location>
        <topology evidence="1">Multi-pass membrane protein</topology>
    </subcellularLocation>
</comment>
<comment type="similarity">
    <text evidence="6">Belongs to the cation transport ATPase (P-type) (TC 3.A.3) family.</text>
</comment>
<name>ATP4_TOXGV</name>
<accession>B9QMJ0</accession>
<accession>A0A0F7VFZ0</accession>
<organism evidence="9">
    <name type="scientific">Toxoplasma gondii (strain ATCC 50861 / VEG)</name>
    <dbReference type="NCBI Taxonomy" id="432359"/>
    <lineage>
        <taxon>Eukaryota</taxon>
        <taxon>Sar</taxon>
        <taxon>Alveolata</taxon>
        <taxon>Apicomplexa</taxon>
        <taxon>Conoidasida</taxon>
        <taxon>Coccidia</taxon>
        <taxon>Eucoccidiorida</taxon>
        <taxon>Eimeriorina</taxon>
        <taxon>Sarcocystidae</taxon>
        <taxon>Toxoplasma</taxon>
    </lineage>
</organism>
<proteinExistence type="evidence at protein level"/>
<evidence type="ECO:0000255" key="1"/>
<evidence type="ECO:0000256" key="2">
    <source>
        <dbReference type="SAM" id="MobiDB-lite"/>
    </source>
</evidence>
<evidence type="ECO:0000269" key="3">
    <source>
    </source>
</evidence>
<evidence type="ECO:0000269" key="4">
    <source>
    </source>
</evidence>
<evidence type="ECO:0000303" key="5">
    <source>
    </source>
</evidence>
<evidence type="ECO:0000305" key="6"/>
<evidence type="ECO:0000312" key="7">
    <source>
        <dbReference type="EMBL" id="CEL78752.1"/>
    </source>
</evidence>
<evidence type="ECO:0000312" key="8">
    <source>
        <dbReference type="EMBL" id="ESS34627.1"/>
    </source>
</evidence>
<evidence type="ECO:0000312" key="9">
    <source>
        <dbReference type="Proteomes" id="UP000002226"/>
    </source>
</evidence>
<reference evidence="7" key="1">
    <citation type="journal article" date="2015" name="PLoS ONE">
        <title>Comprehensive Evaluation of Toxoplasma gondii VEG and Neospora caninum LIV Genomes with Tachyzoite Stage Transcriptome and Proteome Defines Novel Transcript Features.</title>
        <authorList>
            <person name="Ramaprasad A."/>
            <person name="Mourier T."/>
            <person name="Naeem R."/>
            <person name="Malas T.B."/>
            <person name="Moussa E."/>
            <person name="Panigrahi A."/>
            <person name="Vermont S.J."/>
            <person name="Otto T.D."/>
            <person name="Wastling J."/>
            <person name="Pain A."/>
        </authorList>
    </citation>
    <scope>NUCLEOTIDE SEQUENCE [LARGE SCALE GENOMIC DNA]</scope>
    <source>
        <strain evidence="7">ATCC 50861 / VEG</strain>
    </source>
</reference>
<reference evidence="9" key="2">
    <citation type="submission" date="2008-03" db="EMBL/GenBank/DDBJ databases">
        <title>Annotation of Toxoplasma gondii VEG.</title>
        <authorList>
            <person name="Lorenzi H."/>
            <person name="Inman J."/>
            <person name="Amedeo P."/>
            <person name="Brunk B."/>
            <person name="Roos D."/>
            <person name="Caler E."/>
        </authorList>
    </citation>
    <scope>NUCLEOTIDE SEQUENCE [LARGE SCALE GENOMIC DNA]</scope>
    <source>
        <strain evidence="9">ATCC 50861 / VEG</strain>
    </source>
</reference>
<reference evidence="6" key="3">
    <citation type="journal article" date="2019" name="J. Biol. Chem.">
        <title>Characterization of the ATP4 ion pump in Toxoplasma gondii.</title>
        <authorList>
            <person name="Lehane A.M."/>
            <person name="Dennis A.S.M."/>
            <person name="Bray K.O."/>
            <person name="Li D."/>
            <person name="Rajendran E."/>
            <person name="McCoy J.M."/>
            <person name="McArthur H.M."/>
            <person name="Winterberg M."/>
            <person name="Rahimi F."/>
            <person name="Tonkin C.J."/>
            <person name="Kirk K."/>
            <person name="van Dooren G.G."/>
        </authorList>
    </citation>
    <scope>FUNCTION</scope>
    <scope>ACTIVITY REGULATION</scope>
    <scope>SUBCELLULAR LOCATION</scope>
</reference>
<reference evidence="6" key="4">
    <citation type="journal article" date="2022" name="Nat. Commun.">
        <title>A G358S mutation in the Plasmodium falciparum Na+ pump PfATP4 confers clinically-relevant resistance to cipargamin.</title>
        <authorList>
            <person name="Qiu D."/>
            <person name="Pei J.V."/>
            <person name="Rosling J.E.O."/>
            <person name="Thathy V."/>
            <person name="Li D."/>
            <person name="Xue Y."/>
            <person name="Tanner J.D."/>
            <person name="Penington J.S."/>
            <person name="Aw Y.T.V."/>
            <person name="Aw J.Y.H."/>
            <person name="Xu G."/>
            <person name="Tripathi A.K."/>
            <person name="Gnadig N.F."/>
            <person name="Yeo T."/>
            <person name="Fairhurst K.J."/>
            <person name="Stokes B.H."/>
            <person name="Murithi J.M."/>
            <person name="Kuempornsin K."/>
            <person name="Hasemer H."/>
            <person name="Dennis A.S.M."/>
            <person name="Ridgway M.C."/>
            <person name="Schmitt E.K."/>
            <person name="Straimer J."/>
            <person name="Papenfuss A.T."/>
            <person name="Lee M.C.S."/>
            <person name="Corry B."/>
            <person name="Sinnis P."/>
            <person name="Fidock D.A."/>
            <person name="van Dooren G.G."/>
            <person name="Kirk K."/>
            <person name="Lehane A.M."/>
        </authorList>
    </citation>
    <scope>FUNCTION</scope>
    <scope>CATALYTIC ACTIVITY</scope>
    <scope>ACTIVITY REGULATION</scope>
    <scope>SUBCELLULAR LOCATION</scope>
    <scope>MUTAGENESIS OF GLY-419</scope>
</reference>
<sequence>MAARASADKLSTAGQDPATPVAQVAPDTSSSADGGPSNGASEPGKVGSQPVAAGAEEKVAGHDGESPRRDSHHLRRFSSKRESTVGGSGTGHSQLGKSISSVSQMHRDEHARLLPASSSMSLAPGMGYENVETEVIDRLSKSHVSLKELVETARQSDPEAFRMAVTLTEQSHPTSGKNRFASLPIEELAKEFGLKDMSTGLTEEQVLENRRRYGPNVLEKDKSEPVWKIFIQQFLSPVVLLLLVAAIASLALQEWVEGAAIFIIVTLNASLATYMEKSASNALAKLASMAAPGCVVVREGKAQTVGAVDVVPGDIVLLSTGNSVAADMRCIESVELKTNEALLTGESEDISKTLRAKDYDTPFATNLCFASTIVTNGSGRGLVFATGMETQVGRIAQQLKKAGEGSRLTPLQRGLNRLGGMIGLIAICVLIIVVVVAILTGYRDPAHPDADPVFTIVLVAVGFAVSSIPEGLPMVVTICLSLGARDMVKRKANVRKLPAVETLGCCSVICSDKTGTLTEGKMTAVRLVTVCRNGKVVDADGLTKSFGFYPTKGFDPNGGIFDYNALDEKTKSNLMLQYRDGAFQDFDAVCHNYGNPANKDPTTKLVRSVMLSGYLNSHATTLSRDPDTNRWLAKGNMSEGAIVVGAAKARFGETVAGQEMCGMHDAKADFPRVQELEVPFNSSRKMMMTVHQLPAVNYFGDICLNNTTGTKYTHCAIVKGAPDRVLQHVRYTVREGISGPSVEWEKQMTPEEIMKVEAVNLELSEQALRVLALTFRPLTDADVAALRRQAGADERLKFALGETREELVLLGVIGSVDPPRVGVREAIDRCGEAGIRVIMITGDQRPTAVAIAKDIGLLTSQDDPEQQSIQCSGLHVDDDPMNEHLPEEELDEIIARVKVFSRAQPEDKIAIVEALKRQGHTVAMTGDGVNDAPALKAADIGVAMGIAGTDVAKGASEMVLLDDNFVTIVAAVEEGRKIYSNIQKFVCFLLGTNIGEIIYLTIAIAASMPLPLEALQVLFLNLMSDGCPAVALAKEPSDDENMKIPPRPRKQPIMTRDWWLYGNLPHTIFEAGCVLMSLALGLYLCTGVVQLNPLHEQCSYFTATQLSHNKDIDYRYFCRSFEYRVTQDYTGWVTHIDFWNPKTGKMEQVLGALAGKHPNVTVETPGLAKYIVEAMSDGCPEGVDTDSETGFCMPKAGTKVSSATDTPKGSAPKDYFDVSARGAKMGRTCSFITAVWCEMLRAYTVRTWQWFFLVFNRNPWMHLACSISATLTSLLTIVPGIQSAFSTCALPWYLYLFAIGCGFVNLILDELIPKPLYRLKKAREARAALTSKAPAIMA</sequence>
<protein>
    <recommendedName>
        <fullName evidence="6">P-type sodium-transporting ATPase4</fullName>
        <shortName evidence="5">TgATP4</shortName>
        <ecNumber evidence="4">7.2.2.3</ecNumber>
    </recommendedName>
    <alternativeName>
        <fullName evidence="5">ATP4 ion pump</fullName>
    </alternativeName>
    <alternativeName>
        <fullName evidence="8">Putative P-type ATPase4</fullName>
    </alternativeName>
</protein>
<keyword id="KW-0067">ATP-binding</keyword>
<keyword id="KW-1003">Cell membrane</keyword>
<keyword id="KW-0378">Hydrolase</keyword>
<keyword id="KW-0406">Ion transport</keyword>
<keyword id="KW-0472">Membrane</keyword>
<keyword id="KW-0547">Nucleotide-binding</keyword>
<keyword id="KW-1185">Reference proteome</keyword>
<keyword id="KW-0915">Sodium</keyword>
<keyword id="KW-0739">Sodium transport</keyword>
<keyword id="KW-1278">Translocase</keyword>
<keyword id="KW-0812">Transmembrane</keyword>
<keyword id="KW-1133">Transmembrane helix</keyword>
<keyword id="KW-0813">Transport</keyword>
<dbReference type="EC" id="7.2.2.3" evidence="4"/>
<dbReference type="EMBL" id="LN714502">
    <property type="protein sequence ID" value="CEL78752.1"/>
    <property type="molecule type" value="Genomic_DNA"/>
</dbReference>
<dbReference type="EMBL" id="AAYL02000063">
    <property type="protein sequence ID" value="ESS34627.1"/>
    <property type="molecule type" value="Genomic_DNA"/>
</dbReference>
<dbReference type="SMR" id="B9QMJ0"/>
<dbReference type="STRING" id="432359.B9QMJ0"/>
<dbReference type="PaxDb" id="5811-TGME49_078660"/>
<dbReference type="EnsemblProtists" id="ESS34627">
    <property type="protein sequence ID" value="ESS34627"/>
    <property type="gene ID" value="TGVEG_278660"/>
</dbReference>
<dbReference type="VEuPathDB" id="ToxoDB:TGVEG_278660"/>
<dbReference type="eggNOG" id="KOG0202">
    <property type="taxonomic scope" value="Eukaryota"/>
</dbReference>
<dbReference type="OMA" id="FNRNPWM"/>
<dbReference type="OrthoDB" id="1086at5809"/>
<dbReference type="Proteomes" id="UP000002226">
    <property type="component" value="Partially assembled WGS sequence"/>
</dbReference>
<dbReference type="GO" id="GO:0005886">
    <property type="term" value="C:plasma membrane"/>
    <property type="evidence" value="ECO:0007669"/>
    <property type="project" value="UniProtKB-SubCell"/>
</dbReference>
<dbReference type="GO" id="GO:0005524">
    <property type="term" value="F:ATP binding"/>
    <property type="evidence" value="ECO:0007669"/>
    <property type="project" value="UniProtKB-KW"/>
</dbReference>
<dbReference type="GO" id="GO:0016887">
    <property type="term" value="F:ATP hydrolysis activity"/>
    <property type="evidence" value="ECO:0007669"/>
    <property type="project" value="InterPro"/>
</dbReference>
<dbReference type="GO" id="GO:0005391">
    <property type="term" value="F:P-type sodium:potassium-exchanging transporter activity"/>
    <property type="evidence" value="ECO:0007669"/>
    <property type="project" value="TreeGrafter"/>
</dbReference>
<dbReference type="GO" id="GO:0030007">
    <property type="term" value="P:intracellular potassium ion homeostasis"/>
    <property type="evidence" value="ECO:0007669"/>
    <property type="project" value="TreeGrafter"/>
</dbReference>
<dbReference type="GO" id="GO:0006883">
    <property type="term" value="P:intracellular sodium ion homeostasis"/>
    <property type="evidence" value="ECO:0007669"/>
    <property type="project" value="TreeGrafter"/>
</dbReference>
<dbReference type="GO" id="GO:1990573">
    <property type="term" value="P:potassium ion import across plasma membrane"/>
    <property type="evidence" value="ECO:0007669"/>
    <property type="project" value="TreeGrafter"/>
</dbReference>
<dbReference type="GO" id="GO:1902600">
    <property type="term" value="P:proton transmembrane transport"/>
    <property type="evidence" value="ECO:0007669"/>
    <property type="project" value="TreeGrafter"/>
</dbReference>
<dbReference type="GO" id="GO:0036376">
    <property type="term" value="P:sodium ion export across plasma membrane"/>
    <property type="evidence" value="ECO:0007669"/>
    <property type="project" value="TreeGrafter"/>
</dbReference>
<dbReference type="FunFam" id="3.40.50.1000:FF:000028">
    <property type="entry name" value="Calcium-transporting P-type ATPase, putative"/>
    <property type="match status" value="1"/>
</dbReference>
<dbReference type="FunFam" id="3.40.50.1000:FF:000001">
    <property type="entry name" value="Phospholipid-transporting ATPase IC"/>
    <property type="match status" value="1"/>
</dbReference>
<dbReference type="Gene3D" id="3.40.1110.10">
    <property type="entry name" value="Calcium-transporting ATPase, cytoplasmic domain N"/>
    <property type="match status" value="1"/>
</dbReference>
<dbReference type="Gene3D" id="2.70.150.10">
    <property type="entry name" value="Calcium-transporting ATPase, cytoplasmic transduction domain A"/>
    <property type="match status" value="1"/>
</dbReference>
<dbReference type="Gene3D" id="1.20.1110.10">
    <property type="entry name" value="Calcium-transporting ATPase, transmembrane domain"/>
    <property type="match status" value="2"/>
</dbReference>
<dbReference type="Gene3D" id="3.40.50.1000">
    <property type="entry name" value="HAD superfamily/HAD-like"/>
    <property type="match status" value="1"/>
</dbReference>
<dbReference type="InterPro" id="IPR006068">
    <property type="entry name" value="ATPase_P-typ_cation-transptr_C"/>
</dbReference>
<dbReference type="InterPro" id="IPR004014">
    <property type="entry name" value="ATPase_P-typ_cation-transptr_N"/>
</dbReference>
<dbReference type="InterPro" id="IPR023299">
    <property type="entry name" value="ATPase_P-typ_cyto_dom_N"/>
</dbReference>
<dbReference type="InterPro" id="IPR018303">
    <property type="entry name" value="ATPase_P-typ_P_site"/>
</dbReference>
<dbReference type="InterPro" id="IPR023298">
    <property type="entry name" value="ATPase_P-typ_TM_dom_sf"/>
</dbReference>
<dbReference type="InterPro" id="IPR008250">
    <property type="entry name" value="ATPase_P-typ_transduc_dom_A_sf"/>
</dbReference>
<dbReference type="InterPro" id="IPR050510">
    <property type="entry name" value="Cation_transp_ATPase_P-type"/>
</dbReference>
<dbReference type="InterPro" id="IPR036412">
    <property type="entry name" value="HAD-like_sf"/>
</dbReference>
<dbReference type="InterPro" id="IPR023214">
    <property type="entry name" value="HAD_sf"/>
</dbReference>
<dbReference type="InterPro" id="IPR001757">
    <property type="entry name" value="P_typ_ATPase"/>
</dbReference>
<dbReference type="InterPro" id="IPR044492">
    <property type="entry name" value="P_typ_ATPase_HD_dom"/>
</dbReference>
<dbReference type="NCBIfam" id="TIGR01494">
    <property type="entry name" value="ATPase_P-type"/>
    <property type="match status" value="2"/>
</dbReference>
<dbReference type="PANTHER" id="PTHR43294:SF21">
    <property type="entry name" value="CATION TRANSPORTING ATPASE"/>
    <property type="match status" value="1"/>
</dbReference>
<dbReference type="PANTHER" id="PTHR43294">
    <property type="entry name" value="SODIUM/POTASSIUM-TRANSPORTING ATPASE SUBUNIT ALPHA"/>
    <property type="match status" value="1"/>
</dbReference>
<dbReference type="Pfam" id="PF13246">
    <property type="entry name" value="Cation_ATPase"/>
    <property type="match status" value="1"/>
</dbReference>
<dbReference type="Pfam" id="PF00689">
    <property type="entry name" value="Cation_ATPase_C"/>
    <property type="match status" value="1"/>
</dbReference>
<dbReference type="Pfam" id="PF00690">
    <property type="entry name" value="Cation_ATPase_N"/>
    <property type="match status" value="1"/>
</dbReference>
<dbReference type="Pfam" id="PF00122">
    <property type="entry name" value="E1-E2_ATPase"/>
    <property type="match status" value="1"/>
</dbReference>
<dbReference type="Pfam" id="PF00702">
    <property type="entry name" value="Hydrolase"/>
    <property type="match status" value="1"/>
</dbReference>
<dbReference type="PRINTS" id="PR00119">
    <property type="entry name" value="CATATPASE"/>
</dbReference>
<dbReference type="SFLD" id="SFLDS00003">
    <property type="entry name" value="Haloacid_Dehalogenase"/>
    <property type="match status" value="1"/>
</dbReference>
<dbReference type="SFLD" id="SFLDF00027">
    <property type="entry name" value="p-type_atpase"/>
    <property type="match status" value="1"/>
</dbReference>
<dbReference type="SMART" id="SM00831">
    <property type="entry name" value="Cation_ATPase_N"/>
    <property type="match status" value="1"/>
</dbReference>
<dbReference type="SUPFAM" id="SSF81653">
    <property type="entry name" value="Calcium ATPase, transduction domain A"/>
    <property type="match status" value="1"/>
</dbReference>
<dbReference type="SUPFAM" id="SSF81665">
    <property type="entry name" value="Calcium ATPase, transmembrane domain M"/>
    <property type="match status" value="1"/>
</dbReference>
<dbReference type="SUPFAM" id="SSF56784">
    <property type="entry name" value="HAD-like"/>
    <property type="match status" value="1"/>
</dbReference>
<dbReference type="SUPFAM" id="SSF81660">
    <property type="entry name" value="Metal cation-transporting ATPase, ATP-binding domain N"/>
    <property type="match status" value="1"/>
</dbReference>
<dbReference type="PROSITE" id="PS00154">
    <property type="entry name" value="ATPASE_E1_E2"/>
    <property type="match status" value="1"/>
</dbReference>